<comment type="function">
    <text evidence="1">Cysteine protease, which is translocated into infected cells and plays a central role in pathogenesis by cleaving the C-terminus end of the human small GTPase RhoA/ARHA, a regulator of cytoskeleton. Once cleaved, ARHA loses its lipid modification, and is released from the cell membrane, leading to the subsequent disruption of actin cytoskeleton of the host cell (By similarity).</text>
</comment>
<comment type="subunit">
    <text evidence="1">Interacts with human ARHA.</text>
</comment>
<comment type="subcellular location">
    <subcellularLocation>
        <location>Secreted</location>
    </subcellularLocation>
    <text evidence="1">In infected cells, it is cytoplasmic. Translocated into the host cell by the type III secretion apparatus with the help of the SycT chaperone (By similarity).</text>
</comment>
<comment type="similarity">
    <text evidence="3">Belongs to the peptidase C58 family.</text>
</comment>
<dbReference type="EC" id="3.4.22.-"/>
<dbReference type="EMBL" id="AF336309">
    <property type="protein sequence ID" value="AAK69206.1"/>
    <property type="molecule type" value="Genomic_DNA"/>
</dbReference>
<dbReference type="EMBL" id="AM286416">
    <property type="protein sequence ID" value="CAL10029.1"/>
    <property type="molecule type" value="Genomic_DNA"/>
</dbReference>
<dbReference type="RefSeq" id="NP_863507.1">
    <property type="nucleotide sequence ID" value="NC_005017.1"/>
</dbReference>
<dbReference type="RefSeq" id="WP_011117629.1">
    <property type="nucleotide sequence ID" value="NC_008791.1"/>
</dbReference>
<dbReference type="RefSeq" id="YP_001004061.1">
    <property type="nucleotide sequence ID" value="NC_008791.1"/>
</dbReference>
<dbReference type="SMR" id="A1JU65"/>
<dbReference type="MEROPS" id="C58.001"/>
<dbReference type="KEGG" id="yen:YEP0005"/>
<dbReference type="PATRIC" id="fig|393305.7.peg.5"/>
<dbReference type="eggNOG" id="COG3177">
    <property type="taxonomic scope" value="Bacteria"/>
</dbReference>
<dbReference type="HOGENOM" id="CLU_073575_0_0_6"/>
<dbReference type="OrthoDB" id="6852685at2"/>
<dbReference type="PRO" id="PR:A1JU65"/>
<dbReference type="Proteomes" id="UP000000642">
    <property type="component" value="Plasmid pYVe8081"/>
</dbReference>
<dbReference type="GO" id="GO:0005576">
    <property type="term" value="C:extracellular region"/>
    <property type="evidence" value="ECO:0007669"/>
    <property type="project" value="UniProtKB-SubCell"/>
</dbReference>
<dbReference type="GO" id="GO:0004197">
    <property type="term" value="F:cysteine-type endopeptidase activity"/>
    <property type="evidence" value="ECO:0007669"/>
    <property type="project" value="InterPro"/>
</dbReference>
<dbReference type="GO" id="GO:0006508">
    <property type="term" value="P:proteolysis"/>
    <property type="evidence" value="ECO:0007669"/>
    <property type="project" value="UniProtKB-KW"/>
</dbReference>
<dbReference type="CDD" id="cd20498">
    <property type="entry name" value="C58_YopT"/>
    <property type="match status" value="1"/>
</dbReference>
<dbReference type="Gene3D" id="3.90.70.20">
    <property type="match status" value="1"/>
</dbReference>
<dbReference type="InterPro" id="IPR038765">
    <property type="entry name" value="Papain-like_cys_pep_sf"/>
</dbReference>
<dbReference type="InterPro" id="IPR003951">
    <property type="entry name" value="Peptidase_C58"/>
</dbReference>
<dbReference type="InterPro" id="IPR006473">
    <property type="entry name" value="Peptidase_C58_Yopt"/>
</dbReference>
<dbReference type="NCBIfam" id="TIGR01586">
    <property type="entry name" value="yopT_cys_prot"/>
    <property type="match status" value="1"/>
</dbReference>
<dbReference type="Pfam" id="PF03543">
    <property type="entry name" value="Peptidase_C58"/>
    <property type="match status" value="1"/>
</dbReference>
<dbReference type="PRINTS" id="PR01376">
    <property type="entry name" value="BACSURFANTGN"/>
</dbReference>
<dbReference type="SUPFAM" id="SSF54001">
    <property type="entry name" value="Cysteine proteinases"/>
    <property type="match status" value="1"/>
</dbReference>
<gene>
    <name type="primary">yopT1</name>
    <name type="ordered locus">YEP0005</name>
</gene>
<keyword id="KW-0378">Hydrolase</keyword>
<keyword id="KW-0614">Plasmid</keyword>
<keyword id="KW-0645">Protease</keyword>
<keyword id="KW-0964">Secreted</keyword>
<keyword id="KW-0788">Thiol protease</keyword>
<keyword id="KW-0843">Virulence</keyword>
<protein>
    <recommendedName>
        <fullName>Cysteine protease yopT1</fullName>
        <ecNumber>3.4.22.-</ecNumber>
    </recommendedName>
</protein>
<name>YOPT1_YERE8</name>
<reference key="1">
    <citation type="journal article" date="2001" name="Infect. Immun.">
        <title>Complete DNA sequence of Yersinia enterocolitica serotype 0:8 low-calcium-response plasmid reveals a new virulence plasmid-associated replicon.</title>
        <authorList>
            <person name="Snellings N.J."/>
            <person name="Popek M."/>
            <person name="Lindler L.E."/>
        </authorList>
    </citation>
    <scope>NUCLEOTIDE SEQUENCE [GENOMIC DNA]</scope>
</reference>
<reference key="2">
    <citation type="journal article" date="2006" name="PLoS Genet.">
        <title>The complete genome sequence and comparative genome analysis of the high pathogenicity Yersinia enterocolitica strain 8081.</title>
        <authorList>
            <person name="Thomson N.R."/>
            <person name="Howard S."/>
            <person name="Wren B.W."/>
            <person name="Holden M.T.G."/>
            <person name="Crossman L."/>
            <person name="Challis G.L."/>
            <person name="Churcher C."/>
            <person name="Mungall K."/>
            <person name="Brooks K."/>
            <person name="Chillingworth T."/>
            <person name="Feltwell T."/>
            <person name="Abdellah Z."/>
            <person name="Hauser H."/>
            <person name="Jagels K."/>
            <person name="Maddison M."/>
            <person name="Moule S."/>
            <person name="Sanders M."/>
            <person name="Whitehead S."/>
            <person name="Quail M.A."/>
            <person name="Dougan G."/>
            <person name="Parkhill J."/>
            <person name="Prentice M.B."/>
        </authorList>
    </citation>
    <scope>NUCLEOTIDE SEQUENCE [LARGE SCALE GENOMIC DNA]</scope>
    <source>
        <strain>NCTC 13174 / 8081</strain>
    </source>
</reference>
<organism>
    <name type="scientific">Yersinia enterocolitica serotype O:8 / biotype 1B (strain NCTC 13174 / 8081)</name>
    <dbReference type="NCBI Taxonomy" id="393305"/>
    <lineage>
        <taxon>Bacteria</taxon>
        <taxon>Pseudomonadati</taxon>
        <taxon>Pseudomonadota</taxon>
        <taxon>Gammaproteobacteria</taxon>
        <taxon>Enterobacterales</taxon>
        <taxon>Yersiniaceae</taxon>
        <taxon>Yersinia</taxon>
    </lineage>
</organism>
<evidence type="ECO:0000250" key="1"/>
<evidence type="ECO:0000256" key="2">
    <source>
        <dbReference type="SAM" id="MobiDB-lite"/>
    </source>
</evidence>
<evidence type="ECO:0000305" key="3"/>
<geneLocation type="plasmid">
    <name>pYVe8081</name>
</geneLocation>
<sequence>MDSIHGHYHIQLSNYSAGENLQSATPPEGVIGAHRVKVETALSHSNRQKKLSATIKHNQSSRSMLDRKLTSDGKVNQRSSFTFSMIMYRMIHFVLSTRVPAVRESVANYGGNINFKFAQTKGAFLHQIIKHSDTARGACEALCAHWIRSHAQGQSLFDQLYVGGRKGKFQIDTLYSIKQLQIDGCKADVDQDEVTLDWLKKNGISERMIERHCLLPTVDVTGTTGSEGPDQLLNAILDTNGIGYGYKKISLSGQMSGHTIAAYVNENSGVTFFDPNFGEFHFSDKEKFSKWFTNSFWENSMYHYPLGVGQSFSVFTFDSKEV</sequence>
<proteinExistence type="inferred from homology"/>
<feature type="chain" id="PRO_0000281776" description="Cysteine protease yopT1">
    <location>
        <begin position="1"/>
        <end position="322"/>
    </location>
</feature>
<feature type="region of interest" description="Disordered" evidence="2">
    <location>
        <begin position="42"/>
        <end position="69"/>
    </location>
</feature>
<feature type="active site" evidence="1">
    <location>
        <position position="139"/>
    </location>
</feature>
<feature type="active site" evidence="1">
    <location>
        <position position="258"/>
    </location>
</feature>
<feature type="active site" evidence="1">
    <location>
        <position position="274"/>
    </location>
</feature>
<accession>A1JU65</accession>
<accession>Q84GU1</accession>
<accession>Q93KV0</accession>